<sequence>MKFLDQAKVYVRSGDGGAGCVSFRREKFIEFGGPDGGNGGRGGDVWIECVDGLNTLIDYRYQQHFKAKKGEHGMGANRAGAKGSDVVLRVPAGTQVLDEDEETILADLTEVGQRIRLLSGGNGGFGNAEFKTSTNQAPRRANPGLEGQEKWIWLRLKLIADAGLVGLPNAGKSTFLAATTAAKPKIADYPFTTLHPGLGVVRVDGREFVLADIPGLIEGAHEGAGLGDRFLGHVERCRVLLHLVDGTCEHAGKAYKTVRQELVAYGGGLEDRVEIVALSKIDSLTPELLKQQKERLQRAAKKKPLLLSSQSGKGVPEALRALLAVIDEGREAEVAEARKTEWRPI</sequence>
<gene>
    <name evidence="1" type="primary">obg</name>
    <name type="ordered locus">AZC_4141</name>
</gene>
<proteinExistence type="inferred from homology"/>
<name>OBG_AZOC5</name>
<organism>
    <name type="scientific">Azorhizobium caulinodans (strain ATCC 43989 / DSM 5975 / JCM 20966 / LMG 6465 / NBRC 14845 / NCIMB 13405 / ORS 571)</name>
    <dbReference type="NCBI Taxonomy" id="438753"/>
    <lineage>
        <taxon>Bacteria</taxon>
        <taxon>Pseudomonadati</taxon>
        <taxon>Pseudomonadota</taxon>
        <taxon>Alphaproteobacteria</taxon>
        <taxon>Hyphomicrobiales</taxon>
        <taxon>Xanthobacteraceae</taxon>
        <taxon>Azorhizobium</taxon>
    </lineage>
</organism>
<keyword id="KW-0963">Cytoplasm</keyword>
<keyword id="KW-0342">GTP-binding</keyword>
<keyword id="KW-0378">Hydrolase</keyword>
<keyword id="KW-0460">Magnesium</keyword>
<keyword id="KW-0479">Metal-binding</keyword>
<keyword id="KW-0547">Nucleotide-binding</keyword>
<keyword id="KW-1185">Reference proteome</keyword>
<accession>A8HS51</accession>
<dbReference type="EC" id="3.6.5.-" evidence="1"/>
<dbReference type="EMBL" id="AP009384">
    <property type="protein sequence ID" value="BAF90139.1"/>
    <property type="molecule type" value="Genomic_DNA"/>
</dbReference>
<dbReference type="RefSeq" id="WP_012172661.1">
    <property type="nucleotide sequence ID" value="NC_009937.1"/>
</dbReference>
<dbReference type="SMR" id="A8HS51"/>
<dbReference type="STRING" id="438753.AZC_4141"/>
<dbReference type="KEGG" id="azc:AZC_4141"/>
<dbReference type="eggNOG" id="COG0536">
    <property type="taxonomic scope" value="Bacteria"/>
</dbReference>
<dbReference type="HOGENOM" id="CLU_011747_2_0_5"/>
<dbReference type="Proteomes" id="UP000000270">
    <property type="component" value="Chromosome"/>
</dbReference>
<dbReference type="GO" id="GO:0005737">
    <property type="term" value="C:cytoplasm"/>
    <property type="evidence" value="ECO:0007669"/>
    <property type="project" value="UniProtKB-SubCell"/>
</dbReference>
<dbReference type="GO" id="GO:0005525">
    <property type="term" value="F:GTP binding"/>
    <property type="evidence" value="ECO:0007669"/>
    <property type="project" value="UniProtKB-UniRule"/>
</dbReference>
<dbReference type="GO" id="GO:0003924">
    <property type="term" value="F:GTPase activity"/>
    <property type="evidence" value="ECO:0007669"/>
    <property type="project" value="UniProtKB-UniRule"/>
</dbReference>
<dbReference type="GO" id="GO:0000287">
    <property type="term" value="F:magnesium ion binding"/>
    <property type="evidence" value="ECO:0007669"/>
    <property type="project" value="InterPro"/>
</dbReference>
<dbReference type="GO" id="GO:0042254">
    <property type="term" value="P:ribosome biogenesis"/>
    <property type="evidence" value="ECO:0007669"/>
    <property type="project" value="UniProtKB-UniRule"/>
</dbReference>
<dbReference type="CDD" id="cd01898">
    <property type="entry name" value="Obg"/>
    <property type="match status" value="1"/>
</dbReference>
<dbReference type="FunFam" id="2.70.210.12:FF:000001">
    <property type="entry name" value="GTPase Obg"/>
    <property type="match status" value="1"/>
</dbReference>
<dbReference type="Gene3D" id="2.70.210.12">
    <property type="entry name" value="GTP1/OBG domain"/>
    <property type="match status" value="1"/>
</dbReference>
<dbReference type="Gene3D" id="3.40.50.300">
    <property type="entry name" value="P-loop containing nucleotide triphosphate hydrolases"/>
    <property type="match status" value="1"/>
</dbReference>
<dbReference type="HAMAP" id="MF_01454">
    <property type="entry name" value="GTPase_Obg"/>
    <property type="match status" value="1"/>
</dbReference>
<dbReference type="InterPro" id="IPR031167">
    <property type="entry name" value="G_OBG"/>
</dbReference>
<dbReference type="InterPro" id="IPR006073">
    <property type="entry name" value="GTP-bd"/>
</dbReference>
<dbReference type="InterPro" id="IPR014100">
    <property type="entry name" value="GTP-bd_Obg/CgtA"/>
</dbReference>
<dbReference type="InterPro" id="IPR006074">
    <property type="entry name" value="GTP1-OBG_CS"/>
</dbReference>
<dbReference type="InterPro" id="IPR006169">
    <property type="entry name" value="GTP1_OBG_dom"/>
</dbReference>
<dbReference type="InterPro" id="IPR036726">
    <property type="entry name" value="GTP1_OBG_dom_sf"/>
</dbReference>
<dbReference type="InterPro" id="IPR045086">
    <property type="entry name" value="OBG_GTPase"/>
</dbReference>
<dbReference type="InterPro" id="IPR027417">
    <property type="entry name" value="P-loop_NTPase"/>
</dbReference>
<dbReference type="NCBIfam" id="TIGR02729">
    <property type="entry name" value="Obg_CgtA"/>
    <property type="match status" value="1"/>
</dbReference>
<dbReference type="NCBIfam" id="NF008955">
    <property type="entry name" value="PRK12297.1"/>
    <property type="match status" value="1"/>
</dbReference>
<dbReference type="NCBIfam" id="NF008956">
    <property type="entry name" value="PRK12299.1"/>
    <property type="match status" value="1"/>
</dbReference>
<dbReference type="PANTHER" id="PTHR11702">
    <property type="entry name" value="DEVELOPMENTALLY REGULATED GTP-BINDING PROTEIN-RELATED"/>
    <property type="match status" value="1"/>
</dbReference>
<dbReference type="PANTHER" id="PTHR11702:SF31">
    <property type="entry name" value="MITOCHONDRIAL RIBOSOME-ASSOCIATED GTPASE 2"/>
    <property type="match status" value="1"/>
</dbReference>
<dbReference type="Pfam" id="PF01018">
    <property type="entry name" value="GTP1_OBG"/>
    <property type="match status" value="1"/>
</dbReference>
<dbReference type="Pfam" id="PF01926">
    <property type="entry name" value="MMR_HSR1"/>
    <property type="match status" value="1"/>
</dbReference>
<dbReference type="PIRSF" id="PIRSF002401">
    <property type="entry name" value="GTP_bd_Obg/CgtA"/>
    <property type="match status" value="1"/>
</dbReference>
<dbReference type="PRINTS" id="PR00326">
    <property type="entry name" value="GTP1OBG"/>
</dbReference>
<dbReference type="SUPFAM" id="SSF82051">
    <property type="entry name" value="Obg GTP-binding protein N-terminal domain"/>
    <property type="match status" value="1"/>
</dbReference>
<dbReference type="SUPFAM" id="SSF52540">
    <property type="entry name" value="P-loop containing nucleoside triphosphate hydrolases"/>
    <property type="match status" value="1"/>
</dbReference>
<dbReference type="PROSITE" id="PS51710">
    <property type="entry name" value="G_OBG"/>
    <property type="match status" value="1"/>
</dbReference>
<dbReference type="PROSITE" id="PS00905">
    <property type="entry name" value="GTP1_OBG"/>
    <property type="match status" value="1"/>
</dbReference>
<dbReference type="PROSITE" id="PS51883">
    <property type="entry name" value="OBG"/>
    <property type="match status" value="1"/>
</dbReference>
<comment type="function">
    <text evidence="1">An essential GTPase which binds GTP, GDP and possibly (p)ppGpp with moderate affinity, with high nucleotide exchange rates and a fairly low GTP hydrolysis rate. Plays a role in control of the cell cycle, stress response, ribosome biogenesis and in those bacteria that undergo differentiation, in morphogenesis control.</text>
</comment>
<comment type="cofactor">
    <cofactor evidence="1">
        <name>Mg(2+)</name>
        <dbReference type="ChEBI" id="CHEBI:18420"/>
    </cofactor>
</comment>
<comment type="subunit">
    <text evidence="1">Monomer.</text>
</comment>
<comment type="subcellular location">
    <subcellularLocation>
        <location evidence="1">Cytoplasm</location>
    </subcellularLocation>
</comment>
<comment type="similarity">
    <text evidence="1">Belongs to the TRAFAC class OBG-HflX-like GTPase superfamily. OBG GTPase family.</text>
</comment>
<feature type="chain" id="PRO_0000385711" description="GTPase Obg">
    <location>
        <begin position="1"/>
        <end position="345"/>
    </location>
</feature>
<feature type="domain" description="Obg" evidence="2">
    <location>
        <begin position="1"/>
        <end position="159"/>
    </location>
</feature>
<feature type="domain" description="OBG-type G" evidence="1">
    <location>
        <begin position="160"/>
        <end position="327"/>
    </location>
</feature>
<feature type="binding site" evidence="1">
    <location>
        <begin position="166"/>
        <end position="173"/>
    </location>
    <ligand>
        <name>GTP</name>
        <dbReference type="ChEBI" id="CHEBI:37565"/>
    </ligand>
</feature>
<feature type="binding site" evidence="1">
    <location>
        <position position="173"/>
    </location>
    <ligand>
        <name>Mg(2+)</name>
        <dbReference type="ChEBI" id="CHEBI:18420"/>
    </ligand>
</feature>
<feature type="binding site" evidence="1">
    <location>
        <begin position="191"/>
        <end position="195"/>
    </location>
    <ligand>
        <name>GTP</name>
        <dbReference type="ChEBI" id="CHEBI:37565"/>
    </ligand>
</feature>
<feature type="binding site" evidence="1">
    <location>
        <position position="193"/>
    </location>
    <ligand>
        <name>Mg(2+)</name>
        <dbReference type="ChEBI" id="CHEBI:18420"/>
    </ligand>
</feature>
<feature type="binding site" evidence="1">
    <location>
        <begin position="212"/>
        <end position="215"/>
    </location>
    <ligand>
        <name>GTP</name>
        <dbReference type="ChEBI" id="CHEBI:37565"/>
    </ligand>
</feature>
<feature type="binding site" evidence="1">
    <location>
        <begin position="279"/>
        <end position="282"/>
    </location>
    <ligand>
        <name>GTP</name>
        <dbReference type="ChEBI" id="CHEBI:37565"/>
    </ligand>
</feature>
<feature type="binding site" evidence="1">
    <location>
        <begin position="308"/>
        <end position="310"/>
    </location>
    <ligand>
        <name>GTP</name>
        <dbReference type="ChEBI" id="CHEBI:37565"/>
    </ligand>
</feature>
<reference key="1">
    <citation type="submission" date="2007-04" db="EMBL/GenBank/DDBJ databases">
        <title>Complete genome sequence of the nitrogen-fixing bacterium Azorhizobium caulinodans ORS571.</title>
        <authorList>
            <person name="Lee K.B."/>
            <person name="Backer P.D."/>
            <person name="Aono T."/>
            <person name="Liu C.T."/>
            <person name="Suzuki S."/>
            <person name="Suzuki T."/>
            <person name="Kaneko T."/>
            <person name="Yamada M."/>
            <person name="Tabata S."/>
            <person name="Kupfer D.M."/>
            <person name="Najar F.Z."/>
            <person name="Wiley G.B."/>
            <person name="Roe B."/>
            <person name="Binnewies T."/>
            <person name="Ussery D."/>
            <person name="Vereecke D."/>
            <person name="Gevers D."/>
            <person name="Holsters M."/>
            <person name="Oyaizu H."/>
        </authorList>
    </citation>
    <scope>NUCLEOTIDE SEQUENCE [LARGE SCALE GENOMIC DNA]</scope>
    <source>
        <strain>ATCC 43989 / DSM 5975 / JCM 20966 / LMG 6465 / NBRC 14845 / NCIMB 13405 / ORS 571</strain>
    </source>
</reference>
<evidence type="ECO:0000255" key="1">
    <source>
        <dbReference type="HAMAP-Rule" id="MF_01454"/>
    </source>
</evidence>
<evidence type="ECO:0000255" key="2">
    <source>
        <dbReference type="PROSITE-ProRule" id="PRU01231"/>
    </source>
</evidence>
<protein>
    <recommendedName>
        <fullName evidence="1">GTPase Obg</fullName>
        <ecNumber evidence="1">3.6.5.-</ecNumber>
    </recommendedName>
    <alternativeName>
        <fullName evidence="1">GTP-binding protein Obg</fullName>
    </alternativeName>
</protein>